<evidence type="ECO:0000255" key="1">
    <source>
        <dbReference type="HAMAP-Rule" id="MF_00113"/>
    </source>
</evidence>
<reference key="1">
    <citation type="journal article" date="2007" name="PLoS Genet.">
        <title>Patterns and implications of gene gain and loss in the evolution of Prochlorococcus.</title>
        <authorList>
            <person name="Kettler G.C."/>
            <person name="Martiny A.C."/>
            <person name="Huang K."/>
            <person name="Zucker J."/>
            <person name="Coleman M.L."/>
            <person name="Rodrigue S."/>
            <person name="Chen F."/>
            <person name="Lapidus A."/>
            <person name="Ferriera S."/>
            <person name="Johnson J."/>
            <person name="Steglich C."/>
            <person name="Church G.M."/>
            <person name="Richardson P."/>
            <person name="Chisholm S.W."/>
        </authorList>
    </citation>
    <scope>NUCLEOTIDE SEQUENCE [LARGE SCALE GENOMIC DNA]</scope>
    <source>
        <strain>MIT 9301</strain>
    </source>
</reference>
<dbReference type="EC" id="2.4.99.17" evidence="1"/>
<dbReference type="EMBL" id="CP000576">
    <property type="protein sequence ID" value="ABO17048.1"/>
    <property type="molecule type" value="Genomic_DNA"/>
</dbReference>
<dbReference type="RefSeq" id="WP_011862430.1">
    <property type="nucleotide sequence ID" value="NC_009091.1"/>
</dbReference>
<dbReference type="SMR" id="A3PBC3"/>
<dbReference type="STRING" id="167546.P9301_04251"/>
<dbReference type="KEGG" id="pmg:P9301_04251"/>
<dbReference type="eggNOG" id="COG0809">
    <property type="taxonomic scope" value="Bacteria"/>
</dbReference>
<dbReference type="HOGENOM" id="CLU_039110_1_0_3"/>
<dbReference type="OrthoDB" id="9805933at2"/>
<dbReference type="UniPathway" id="UPA00392"/>
<dbReference type="Proteomes" id="UP000001430">
    <property type="component" value="Chromosome"/>
</dbReference>
<dbReference type="GO" id="GO:0005737">
    <property type="term" value="C:cytoplasm"/>
    <property type="evidence" value="ECO:0007669"/>
    <property type="project" value="UniProtKB-SubCell"/>
</dbReference>
<dbReference type="GO" id="GO:0051075">
    <property type="term" value="F:S-adenosylmethionine:tRNA ribosyltransferase-isomerase activity"/>
    <property type="evidence" value="ECO:0007669"/>
    <property type="project" value="UniProtKB-EC"/>
</dbReference>
<dbReference type="GO" id="GO:0008616">
    <property type="term" value="P:queuosine biosynthetic process"/>
    <property type="evidence" value="ECO:0007669"/>
    <property type="project" value="UniProtKB-UniRule"/>
</dbReference>
<dbReference type="GO" id="GO:0002099">
    <property type="term" value="P:tRNA wobble guanine modification"/>
    <property type="evidence" value="ECO:0007669"/>
    <property type="project" value="TreeGrafter"/>
</dbReference>
<dbReference type="Gene3D" id="2.40.10.240">
    <property type="entry name" value="QueA-like"/>
    <property type="match status" value="1"/>
</dbReference>
<dbReference type="Gene3D" id="3.40.1780.10">
    <property type="entry name" value="QueA-like"/>
    <property type="match status" value="1"/>
</dbReference>
<dbReference type="HAMAP" id="MF_00113">
    <property type="entry name" value="QueA"/>
    <property type="match status" value="1"/>
</dbReference>
<dbReference type="InterPro" id="IPR003699">
    <property type="entry name" value="QueA"/>
</dbReference>
<dbReference type="InterPro" id="IPR042118">
    <property type="entry name" value="QueA_dom1"/>
</dbReference>
<dbReference type="InterPro" id="IPR042119">
    <property type="entry name" value="QueA_dom2"/>
</dbReference>
<dbReference type="InterPro" id="IPR036100">
    <property type="entry name" value="QueA_sf"/>
</dbReference>
<dbReference type="NCBIfam" id="NF001140">
    <property type="entry name" value="PRK00147.1"/>
    <property type="match status" value="1"/>
</dbReference>
<dbReference type="NCBIfam" id="TIGR00113">
    <property type="entry name" value="queA"/>
    <property type="match status" value="1"/>
</dbReference>
<dbReference type="PANTHER" id="PTHR30307">
    <property type="entry name" value="S-ADENOSYLMETHIONINE:TRNA RIBOSYLTRANSFERASE-ISOMERASE"/>
    <property type="match status" value="1"/>
</dbReference>
<dbReference type="PANTHER" id="PTHR30307:SF0">
    <property type="entry name" value="S-ADENOSYLMETHIONINE:TRNA RIBOSYLTRANSFERASE-ISOMERASE"/>
    <property type="match status" value="1"/>
</dbReference>
<dbReference type="Pfam" id="PF02547">
    <property type="entry name" value="Queuosine_synth"/>
    <property type="match status" value="1"/>
</dbReference>
<dbReference type="SUPFAM" id="SSF111337">
    <property type="entry name" value="QueA-like"/>
    <property type="match status" value="1"/>
</dbReference>
<name>QUEA_PROM0</name>
<proteinExistence type="inferred from homology"/>
<sequence>MISQINNEERDYKLEAYDYLLDPSLIASKPSAIRHESRLMIVRNSFLEEDCLTNKFTKNLLDEFREGDLVIVNNTKVMKARLKVELENKTLVELLVLERSHECIWLCLAKPAKKLKINRKLKLKSPLAQDINLIVDGVDEETGGRFIKFPENITCLNSMNELLDKYGEIPLPPYIKNSEEESFHEKSYQTEYATNPGAVAAPTAGLHLSKSLISNLKKKGVIILPITLHVGYGTFKPIDQEDLSNLKLHKEWVSVNKEVVEEIKRIKKTDRKIIAIGTTSVRALESCYSHEINDFIPIAKYVDLVIKPGYEFKVVDGLLTNFHLPKSSLLLLVSAMIGRERLLDLYKKAIKEKFRFFSYGDAMYISPDSLLEKK</sequence>
<gene>
    <name evidence="1" type="primary">queA</name>
    <name type="ordered locus">P9301_04251</name>
</gene>
<organism>
    <name type="scientific">Prochlorococcus marinus (strain MIT 9301)</name>
    <dbReference type="NCBI Taxonomy" id="167546"/>
    <lineage>
        <taxon>Bacteria</taxon>
        <taxon>Bacillati</taxon>
        <taxon>Cyanobacteriota</taxon>
        <taxon>Cyanophyceae</taxon>
        <taxon>Synechococcales</taxon>
        <taxon>Prochlorococcaceae</taxon>
        <taxon>Prochlorococcus</taxon>
    </lineage>
</organism>
<protein>
    <recommendedName>
        <fullName evidence="1">S-adenosylmethionine:tRNA ribosyltransferase-isomerase</fullName>
        <ecNumber evidence="1">2.4.99.17</ecNumber>
    </recommendedName>
    <alternativeName>
        <fullName evidence="1">Queuosine biosynthesis protein QueA</fullName>
    </alternativeName>
</protein>
<feature type="chain" id="PRO_1000094797" description="S-adenosylmethionine:tRNA ribosyltransferase-isomerase">
    <location>
        <begin position="1"/>
        <end position="374"/>
    </location>
</feature>
<accession>A3PBC3</accession>
<keyword id="KW-0963">Cytoplasm</keyword>
<keyword id="KW-0671">Queuosine biosynthesis</keyword>
<keyword id="KW-1185">Reference proteome</keyword>
<keyword id="KW-0949">S-adenosyl-L-methionine</keyword>
<keyword id="KW-0808">Transferase</keyword>
<comment type="function">
    <text evidence="1">Transfers and isomerizes the ribose moiety from AdoMet to the 7-aminomethyl group of 7-deazaguanine (preQ1-tRNA) to give epoxyqueuosine (oQ-tRNA).</text>
</comment>
<comment type="catalytic activity">
    <reaction evidence="1">
        <text>7-aminomethyl-7-carbaguanosine(34) in tRNA + S-adenosyl-L-methionine = epoxyqueuosine(34) in tRNA + adenine + L-methionine + 2 H(+)</text>
        <dbReference type="Rhea" id="RHEA:32155"/>
        <dbReference type="Rhea" id="RHEA-COMP:10342"/>
        <dbReference type="Rhea" id="RHEA-COMP:18582"/>
        <dbReference type="ChEBI" id="CHEBI:15378"/>
        <dbReference type="ChEBI" id="CHEBI:16708"/>
        <dbReference type="ChEBI" id="CHEBI:57844"/>
        <dbReference type="ChEBI" id="CHEBI:59789"/>
        <dbReference type="ChEBI" id="CHEBI:82833"/>
        <dbReference type="ChEBI" id="CHEBI:194443"/>
        <dbReference type="EC" id="2.4.99.17"/>
    </reaction>
</comment>
<comment type="pathway">
    <text evidence="1">tRNA modification; tRNA-queuosine biosynthesis.</text>
</comment>
<comment type="subunit">
    <text evidence="1">Monomer.</text>
</comment>
<comment type="subcellular location">
    <subcellularLocation>
        <location evidence="1">Cytoplasm</location>
    </subcellularLocation>
</comment>
<comment type="similarity">
    <text evidence="1">Belongs to the QueA family.</text>
</comment>